<organismHost>
    <name type="scientific">Beta macrocarpa</name>
    <name type="common">Beet</name>
    <name type="synonym">Beta vulgaris subsp. macrocarpa</name>
    <dbReference type="NCBI Taxonomy" id="343494"/>
</organismHost>
<organismHost>
    <name type="scientific">Beta vulgaris</name>
    <name type="common">Sugar beet</name>
    <dbReference type="NCBI Taxonomy" id="161934"/>
</organismHost>
<organismHost>
    <name type="scientific">Spinacia oleracea</name>
    <name type="common">Spinach</name>
    <dbReference type="NCBI Taxonomy" id="3562"/>
</organismHost>
<proteinExistence type="predicted"/>
<feature type="chain" id="PRO_0000222500" description="RNA-3 uncharacterized 24.7 kDa protein">
    <location>
        <begin position="1"/>
        <end position="219"/>
    </location>
</feature>
<dbReference type="EMBL" id="M36894">
    <property type="protein sequence ID" value="AAA42798.1"/>
    <property type="molecule type" value="Genomic_RNA"/>
</dbReference>
<dbReference type="PIR" id="A44503">
    <property type="entry name" value="A44503"/>
</dbReference>
<dbReference type="InterPro" id="IPR008419">
    <property type="entry name" value="BNYVV_p25/p26"/>
</dbReference>
<dbReference type="Pfam" id="PF05744">
    <property type="entry name" value="Benyvirus_P25"/>
    <property type="match status" value="1"/>
</dbReference>
<accession>P19229</accession>
<organism>
    <name type="scientific">Beet necrotic yellow vein mosaic virus (isolate France/F2)</name>
    <name type="common">BNYVV</name>
    <dbReference type="NCBI Taxonomy" id="12256"/>
    <lineage>
        <taxon>Viruses</taxon>
        <taxon>Riboviria</taxon>
        <taxon>Orthornavirae</taxon>
        <taxon>Kitrinoviricota</taxon>
        <taxon>Alsuviricetes</taxon>
        <taxon>Hepelivirales</taxon>
        <taxon>Benyviridae</taxon>
        <taxon>Benyvirus</taxon>
        <taxon>Beet necrotic yellow vein virus</taxon>
    </lineage>
</organism>
<name>Y25K_BNYVF</name>
<sequence>MGDILGAVYDLGHRPYLARRTVYEDRLILSTNGNICRAINLLTHDNRTSLVYHNNTKRIRFRGLLCAYHRPYCGFRALCRVMLCSLPRLCDIPINGSRDFVADPTRLDSSVNELLVSTGLVIHYDRVHDVPIHTDGFEVVDFTTVFRGPGNFLLPNATNFPRPTTTDQVYMVCLVNTVDCVLRFESELTVWIHSGLYTGDVLDVDNNVIQAPDGVDDDD</sequence>
<protein>
    <recommendedName>
        <fullName>RNA-3 uncharacterized 24.7 kDa protein</fullName>
    </recommendedName>
</protein>
<reference key="1">
    <citation type="journal article" date="1985" name="J. Gen. Virol.">
        <title>Nucleotide sequence analysis of RNA-3 and RNA-4 of beet necrotic yellow vein virus, isolates F2 and G1.</title>
        <authorList>
            <person name="Bouzoubaa S."/>
            <person name="Guilley H."/>
            <person name="Jonard G."/>
            <person name="Richards K."/>
            <person name="Putz C."/>
        </authorList>
    </citation>
    <scope>NUCLEOTIDE SEQUENCE [GENOMIC RNA]</scope>
</reference>